<dbReference type="EMBL" id="AY582139">
    <property type="protein sequence ID" value="AAT98505.1"/>
    <property type="molecule type" value="Genomic_DNA"/>
</dbReference>
<dbReference type="RefSeq" id="YP_086962.1">
    <property type="nucleotide sequence ID" value="NC_006290.1"/>
</dbReference>
<dbReference type="SMR" id="Q68S10"/>
<dbReference type="GeneID" id="3021502"/>
<dbReference type="GO" id="GO:0009535">
    <property type="term" value="C:chloroplast thylakoid membrane"/>
    <property type="evidence" value="ECO:0007669"/>
    <property type="project" value="UniProtKB-SubCell"/>
</dbReference>
<dbReference type="GO" id="GO:0009523">
    <property type="term" value="C:photosystem II"/>
    <property type="evidence" value="ECO:0007669"/>
    <property type="project" value="UniProtKB-KW"/>
</dbReference>
<dbReference type="GO" id="GO:0016168">
    <property type="term" value="F:chlorophyll binding"/>
    <property type="evidence" value="ECO:0007669"/>
    <property type="project" value="UniProtKB-UniRule"/>
</dbReference>
<dbReference type="GO" id="GO:0045156">
    <property type="term" value="F:electron transporter, transferring electrons within the cyclic electron transport pathway of photosynthesis activity"/>
    <property type="evidence" value="ECO:0007669"/>
    <property type="project" value="InterPro"/>
</dbReference>
<dbReference type="GO" id="GO:0046872">
    <property type="term" value="F:metal ion binding"/>
    <property type="evidence" value="ECO:0007669"/>
    <property type="project" value="UniProtKB-KW"/>
</dbReference>
<dbReference type="GO" id="GO:0009772">
    <property type="term" value="P:photosynthetic electron transport in photosystem II"/>
    <property type="evidence" value="ECO:0007669"/>
    <property type="project" value="InterPro"/>
</dbReference>
<dbReference type="FunFam" id="1.10.10.670:FF:000001">
    <property type="entry name" value="Photosystem II CP43 reaction center protein"/>
    <property type="match status" value="1"/>
</dbReference>
<dbReference type="Gene3D" id="1.10.10.670">
    <property type="entry name" value="photosystem ii from thermosynechococcus elongatus"/>
    <property type="match status" value="1"/>
</dbReference>
<dbReference type="HAMAP" id="MF_01496">
    <property type="entry name" value="PSII_PsbC_CP43"/>
    <property type="match status" value="1"/>
</dbReference>
<dbReference type="InterPro" id="IPR000932">
    <property type="entry name" value="PS_antenna-like"/>
</dbReference>
<dbReference type="InterPro" id="IPR036001">
    <property type="entry name" value="PS_II_antenna-like_sf"/>
</dbReference>
<dbReference type="InterPro" id="IPR005869">
    <property type="entry name" value="PSII_PsbC"/>
</dbReference>
<dbReference type="InterPro" id="IPR044900">
    <property type="entry name" value="PSII_PsbC_sf"/>
</dbReference>
<dbReference type="NCBIfam" id="TIGR01153">
    <property type="entry name" value="psbC"/>
    <property type="match status" value="1"/>
</dbReference>
<dbReference type="Pfam" id="PF00421">
    <property type="entry name" value="PSII"/>
    <property type="match status" value="1"/>
</dbReference>
<dbReference type="SUPFAM" id="SSF161077">
    <property type="entry name" value="Photosystem II antenna protein-like"/>
    <property type="match status" value="1"/>
</dbReference>
<comment type="function">
    <text evidence="1">One of the components of the core complex of photosystem II (PSII). It binds chlorophyll and helps catalyze the primary light-induced photochemical processes of PSII. PSII is a light-driven water:plastoquinone oxidoreductase, using light energy to abstract electrons from H(2)O, generating O(2) and a proton gradient subsequently used for ATP formation.</text>
</comment>
<comment type="cofactor">
    <text evidence="1">Binds multiple chlorophylls and provides some of the ligands for the Ca-4Mn-5O cluster of the oxygen-evolving complex. It may also provide a ligand for a Cl- that is required for oxygen evolution. PSII binds additional chlorophylls, carotenoids and specific lipids.</text>
</comment>
<comment type="subunit">
    <text evidence="1">PSII is composed of 1 copy each of membrane proteins PsbA, PsbB, PsbC, PsbD, PsbE, PsbF, PsbH, PsbI, PsbJ, PsbK, PsbL, PsbM, PsbT, PsbX, PsbY, PsbZ, Psb30/Ycf12, at least 3 peripheral proteins of the oxygen-evolving complex and a large number of cofactors. It forms dimeric complexes.</text>
</comment>
<comment type="subcellular location">
    <subcellularLocation>
        <location evidence="1">Plastid</location>
        <location evidence="1">Chloroplast thylakoid membrane</location>
        <topology evidence="1">Multi-pass membrane protein</topology>
    </subcellularLocation>
</comment>
<comment type="similarity">
    <text evidence="1">Belongs to the PsbB/PsbC family. PsbC subfamily.</text>
</comment>
<name>PSBC_PANGI</name>
<proteinExistence type="inferred from homology"/>
<protein>
    <recommendedName>
        <fullName evidence="1">Photosystem II CP43 reaction center protein</fullName>
    </recommendedName>
    <alternativeName>
        <fullName evidence="1">PSII 43 kDa protein</fullName>
    </alternativeName>
    <alternativeName>
        <fullName evidence="1">Protein CP-43</fullName>
    </alternativeName>
</protein>
<keyword id="KW-0007">Acetylation</keyword>
<keyword id="KW-0148">Chlorophyll</keyword>
<keyword id="KW-0150">Chloroplast</keyword>
<keyword id="KW-0157">Chromophore</keyword>
<keyword id="KW-0464">Manganese</keyword>
<keyword id="KW-0472">Membrane</keyword>
<keyword id="KW-0479">Metal-binding</keyword>
<keyword id="KW-0597">Phosphoprotein</keyword>
<keyword id="KW-0602">Photosynthesis</keyword>
<keyword id="KW-0604">Photosystem II</keyword>
<keyword id="KW-0934">Plastid</keyword>
<keyword id="KW-0793">Thylakoid</keyword>
<keyword id="KW-0812">Transmembrane</keyword>
<keyword id="KW-1133">Transmembrane helix</keyword>
<feature type="propeptide" id="PRO_0000431189" evidence="1">
    <location>
        <begin position="1"/>
        <end position="14"/>
    </location>
</feature>
<feature type="chain" id="PRO_0000361462" description="Photosystem II CP43 reaction center protein" evidence="1">
    <location>
        <begin position="15"/>
        <end position="473"/>
    </location>
</feature>
<feature type="transmembrane region" description="Helical" evidence="1">
    <location>
        <begin position="69"/>
        <end position="93"/>
    </location>
</feature>
<feature type="transmembrane region" description="Helical" evidence="1">
    <location>
        <begin position="134"/>
        <end position="155"/>
    </location>
</feature>
<feature type="transmembrane region" description="Helical" evidence="1">
    <location>
        <begin position="178"/>
        <end position="200"/>
    </location>
</feature>
<feature type="transmembrane region" description="Helical" evidence="1">
    <location>
        <begin position="255"/>
        <end position="275"/>
    </location>
</feature>
<feature type="transmembrane region" description="Helical" evidence="1">
    <location>
        <begin position="291"/>
        <end position="312"/>
    </location>
</feature>
<feature type="transmembrane region" description="Helical" evidence="1">
    <location>
        <begin position="447"/>
        <end position="471"/>
    </location>
</feature>
<feature type="binding site" evidence="1">
    <location>
        <position position="367"/>
    </location>
    <ligand>
        <name>[CaMn4O5] cluster</name>
        <dbReference type="ChEBI" id="CHEBI:189552"/>
    </ligand>
</feature>
<feature type="modified residue" description="N-acetylthreonine" evidence="1">
    <location>
        <position position="15"/>
    </location>
</feature>
<feature type="modified residue" description="Phosphothreonine" evidence="1">
    <location>
        <position position="15"/>
    </location>
</feature>
<sequence length="473" mass="51822">MKTLYSLRRFYPVETLFNGTLALAGRDQETTGFAWWAGNARLINLSGKLLGAHVAHAGLIVFWAGGMNLFEVAHFVPEKPMYEQGLILLPHLATLGWGVGPGGEVIDTFPYFVSGVLHLISSAVLGFGGIYHALLGPETLEESFPFFGYVWKDRNKMTTILGIHLILLGIGAFLLVFKALYFGGVYDTWAPGGGDVRKITNLTLSPSIIFGYLLKSPFGGEGWIVSVDDLEDIIGGHVWLGSICILGGIWHILTKPFAWARRALVWSGEAYLSYSLGALSVFGFIACCFVWFNNTAYPSEFYGPTGPEASQAQAFTFLVRDQRLGANVGSAQGPTGLGKYLMRSPTGEVIFGGETMRFWDLRAPWLEPLRGPNGLDLSRLKKDIQPWQERRSAEYMTHAPLGSLNSVGGVATEINAVNYVSPRSWLATSHFVLGFFLFVGHLWHAGRARAAAAGFEKGIDRDFEPVLSMTPLN</sequence>
<reference key="1">
    <citation type="journal article" date="2004" name="DNA Res.">
        <title>Complete chloroplast genome sequence from Korea ginseng (Panax schinseng Nees) and comparative analysis of sequence evolution among 17 vascular plants.</title>
        <authorList>
            <person name="Kim K.-J."/>
            <person name="Lee H.-L."/>
        </authorList>
    </citation>
    <scope>NUCLEOTIDE SEQUENCE [LARGE SCALE GENOMIC DNA]</scope>
</reference>
<gene>
    <name evidence="1" type="primary">psbC</name>
    <name type="ORF">PSC0358</name>
</gene>
<geneLocation type="chloroplast"/>
<organism>
    <name type="scientific">Panax ginseng</name>
    <name type="common">Korean ginseng</name>
    <dbReference type="NCBI Taxonomy" id="4054"/>
    <lineage>
        <taxon>Eukaryota</taxon>
        <taxon>Viridiplantae</taxon>
        <taxon>Streptophyta</taxon>
        <taxon>Embryophyta</taxon>
        <taxon>Tracheophyta</taxon>
        <taxon>Spermatophyta</taxon>
        <taxon>Magnoliopsida</taxon>
        <taxon>eudicotyledons</taxon>
        <taxon>Gunneridae</taxon>
        <taxon>Pentapetalae</taxon>
        <taxon>asterids</taxon>
        <taxon>campanulids</taxon>
        <taxon>Apiales</taxon>
        <taxon>Araliaceae</taxon>
        <taxon>Panax</taxon>
    </lineage>
</organism>
<evidence type="ECO:0000255" key="1">
    <source>
        <dbReference type="HAMAP-Rule" id="MF_01496"/>
    </source>
</evidence>
<accession>Q68S10</accession>